<gene>
    <name type="primary">cwf10</name>
    <name type="synonym">snu114</name>
    <name type="synonym">spef2</name>
    <name type="ORF">SPBC215.12</name>
</gene>
<dbReference type="EMBL" id="CU329671">
    <property type="protein sequence ID" value="CAA22126.2"/>
    <property type="molecule type" value="Genomic_DNA"/>
</dbReference>
<dbReference type="PIR" id="T39902">
    <property type="entry name" value="T39902"/>
</dbReference>
<dbReference type="RefSeq" id="NP_596689.2">
    <property type="nucleotide sequence ID" value="NM_001022612.2"/>
</dbReference>
<dbReference type="PDB" id="3JB9">
    <property type="method" value="EM"/>
    <property type="resolution" value="3.60 A"/>
    <property type="chains" value="B=1-984"/>
</dbReference>
<dbReference type="PDB" id="9ESH">
    <property type="method" value="EM"/>
    <property type="resolution" value="3.20 A"/>
    <property type="chains" value="B=1-984"/>
</dbReference>
<dbReference type="PDB" id="9ESI">
    <property type="method" value="EM"/>
    <property type="resolution" value="3.10 A"/>
    <property type="chains" value="B=1-984"/>
</dbReference>
<dbReference type="PDBsum" id="3JB9"/>
<dbReference type="PDBsum" id="9ESH"/>
<dbReference type="PDBsum" id="9ESI"/>
<dbReference type="EMDB" id="EMD-19941"/>
<dbReference type="EMDB" id="EMD-19942"/>
<dbReference type="SMR" id="O94316"/>
<dbReference type="BioGRID" id="277234">
    <property type="interactions" value="97"/>
</dbReference>
<dbReference type="FunCoup" id="O94316">
    <property type="interactions" value="1145"/>
</dbReference>
<dbReference type="IntAct" id="O94316">
    <property type="interactions" value="11"/>
</dbReference>
<dbReference type="STRING" id="284812.O94316"/>
<dbReference type="iPTMnet" id="O94316"/>
<dbReference type="PaxDb" id="4896-SPBC215.12.1"/>
<dbReference type="EnsemblFungi" id="SPBC215.12.1">
    <property type="protein sequence ID" value="SPBC215.12.1:pep"/>
    <property type="gene ID" value="SPBC215.12"/>
</dbReference>
<dbReference type="GeneID" id="2540711"/>
<dbReference type="KEGG" id="spo:2540711"/>
<dbReference type="PomBase" id="SPBC215.12">
    <property type="gene designation" value="cwf10"/>
</dbReference>
<dbReference type="VEuPathDB" id="FungiDB:SPBC215.12"/>
<dbReference type="eggNOG" id="KOG0468">
    <property type="taxonomic scope" value="Eukaryota"/>
</dbReference>
<dbReference type="HOGENOM" id="CLU_002794_11_2_1"/>
<dbReference type="InParanoid" id="O94316"/>
<dbReference type="OMA" id="YIFRPIR"/>
<dbReference type="Reactome" id="R-SPO-72163">
    <property type="pathway name" value="mRNA Splicing - Major Pathway"/>
</dbReference>
<dbReference type="PRO" id="PR:O94316"/>
<dbReference type="Proteomes" id="UP000002485">
    <property type="component" value="Chromosome II"/>
</dbReference>
<dbReference type="GO" id="GO:0005829">
    <property type="term" value="C:cytosol"/>
    <property type="evidence" value="ECO:0007005"/>
    <property type="project" value="PomBase"/>
</dbReference>
<dbReference type="GO" id="GO:0005634">
    <property type="term" value="C:nucleus"/>
    <property type="evidence" value="ECO:0007005"/>
    <property type="project" value="PomBase"/>
</dbReference>
<dbReference type="GO" id="GO:0005721">
    <property type="term" value="C:pericentric heterochromatin"/>
    <property type="evidence" value="ECO:0000314"/>
    <property type="project" value="PomBase"/>
</dbReference>
<dbReference type="GO" id="GO:0071014">
    <property type="term" value="C:post-mRNA release spliceosomal complex"/>
    <property type="evidence" value="ECO:0000314"/>
    <property type="project" value="PomBase"/>
</dbReference>
<dbReference type="GO" id="GO:0000974">
    <property type="term" value="C:Prp19 complex"/>
    <property type="evidence" value="ECO:0000314"/>
    <property type="project" value="PomBase"/>
</dbReference>
<dbReference type="GO" id="GO:0005681">
    <property type="term" value="C:spliceosomal complex"/>
    <property type="evidence" value="ECO:0000314"/>
    <property type="project" value="PomBase"/>
</dbReference>
<dbReference type="GO" id="GO:0071007">
    <property type="term" value="C:U2-type catalytic step 2 spliceosome"/>
    <property type="evidence" value="ECO:0000318"/>
    <property type="project" value="GO_Central"/>
</dbReference>
<dbReference type="GO" id="GO:0046540">
    <property type="term" value="C:U4/U6 x U5 tri-snRNP complex"/>
    <property type="evidence" value="ECO:0000318"/>
    <property type="project" value="GO_Central"/>
</dbReference>
<dbReference type="GO" id="GO:0005682">
    <property type="term" value="C:U5 snRNP"/>
    <property type="evidence" value="ECO:0000314"/>
    <property type="project" value="PomBase"/>
</dbReference>
<dbReference type="GO" id="GO:0005525">
    <property type="term" value="F:GTP binding"/>
    <property type="evidence" value="ECO:0000266"/>
    <property type="project" value="PomBase"/>
</dbReference>
<dbReference type="GO" id="GO:0003924">
    <property type="term" value="F:GTPase activity"/>
    <property type="evidence" value="ECO:0000318"/>
    <property type="project" value="GO_Central"/>
</dbReference>
<dbReference type="GO" id="GO:0030623">
    <property type="term" value="F:U5 snRNA binding"/>
    <property type="evidence" value="ECO:0000318"/>
    <property type="project" value="GO_Central"/>
</dbReference>
<dbReference type="GO" id="GO:0045292">
    <property type="term" value="P:mRNA cis splicing, via spliceosome"/>
    <property type="evidence" value="ECO:0000269"/>
    <property type="project" value="PomBase"/>
</dbReference>
<dbReference type="GO" id="GO:0000398">
    <property type="term" value="P:mRNA splicing, via spliceosome"/>
    <property type="evidence" value="ECO:0000318"/>
    <property type="project" value="GO_Central"/>
</dbReference>
<dbReference type="GO" id="GO:0031047">
    <property type="term" value="P:regulatory ncRNA-mediated gene silencing"/>
    <property type="evidence" value="ECO:0000269"/>
    <property type="project" value="PomBase"/>
</dbReference>
<dbReference type="GO" id="GO:0140727">
    <property type="term" value="P:siRNA-mediated pericentric heterochromatin formation"/>
    <property type="evidence" value="ECO:0000315"/>
    <property type="project" value="PomBase"/>
</dbReference>
<dbReference type="GO" id="GO:0000244">
    <property type="term" value="P:spliceosomal tri-snRNP complex assembly"/>
    <property type="evidence" value="ECO:0000266"/>
    <property type="project" value="PomBase"/>
</dbReference>
<dbReference type="CDD" id="cd04098">
    <property type="entry name" value="eEF2_C_snRNP"/>
    <property type="match status" value="1"/>
</dbReference>
<dbReference type="CDD" id="cd04090">
    <property type="entry name" value="EF2_II_snRNP"/>
    <property type="match status" value="1"/>
</dbReference>
<dbReference type="CDD" id="cd01683">
    <property type="entry name" value="EF2_IV_snRNP"/>
    <property type="match status" value="1"/>
</dbReference>
<dbReference type="CDD" id="cd16264">
    <property type="entry name" value="snRNP_III"/>
    <property type="match status" value="1"/>
</dbReference>
<dbReference type="CDD" id="cd04167">
    <property type="entry name" value="Snu114p"/>
    <property type="match status" value="1"/>
</dbReference>
<dbReference type="DisProt" id="DP02109"/>
<dbReference type="FunFam" id="3.30.70.240:FF:000004">
    <property type="entry name" value="116 kDa U5 small nuclear ribonucleoprotein"/>
    <property type="match status" value="1"/>
</dbReference>
<dbReference type="FunFam" id="2.40.30.10:FF:000029">
    <property type="entry name" value="116 kDa U5 small nuclear ribonucleoprotein component"/>
    <property type="match status" value="1"/>
</dbReference>
<dbReference type="FunFam" id="3.30.230.10:FF:000009">
    <property type="entry name" value="116 kDa U5 small nuclear ribonucleoprotein component"/>
    <property type="match status" value="1"/>
</dbReference>
<dbReference type="FunFam" id="3.90.1430.10:FF:000001">
    <property type="entry name" value="116 kDa U5 small nuclear ribonucleoprotein component"/>
    <property type="match status" value="1"/>
</dbReference>
<dbReference type="FunFam" id="3.30.70.870:FF:000002">
    <property type="entry name" value="Translation elongation factor 2"/>
    <property type="match status" value="1"/>
</dbReference>
<dbReference type="FunFam" id="3.40.50.300:FF:000646">
    <property type="entry name" value="U5 small nuclear ribonucleoprotein component"/>
    <property type="match status" value="1"/>
</dbReference>
<dbReference type="Gene3D" id="3.30.230.10">
    <property type="match status" value="1"/>
</dbReference>
<dbReference type="Gene3D" id="3.30.70.240">
    <property type="match status" value="1"/>
</dbReference>
<dbReference type="Gene3D" id="3.30.70.870">
    <property type="entry name" value="Elongation Factor G (Translational Gtpase), domain 3"/>
    <property type="match status" value="1"/>
</dbReference>
<dbReference type="Gene3D" id="3.40.50.300">
    <property type="entry name" value="P-loop containing nucleotide triphosphate hydrolases"/>
    <property type="match status" value="1"/>
</dbReference>
<dbReference type="Gene3D" id="2.40.30.10">
    <property type="entry name" value="Translation factors"/>
    <property type="match status" value="1"/>
</dbReference>
<dbReference type="Gene3D" id="3.90.1430.10">
    <property type="entry name" value="Yeast translation eEF2 (G' domain)"/>
    <property type="match status" value="1"/>
</dbReference>
<dbReference type="InterPro" id="IPR035647">
    <property type="entry name" value="EFG_III/V"/>
</dbReference>
<dbReference type="InterPro" id="IPR000640">
    <property type="entry name" value="EFG_V-like"/>
</dbReference>
<dbReference type="InterPro" id="IPR004161">
    <property type="entry name" value="EFTu-like_2"/>
</dbReference>
<dbReference type="InterPro" id="IPR031950">
    <property type="entry name" value="EFTUD2_N"/>
</dbReference>
<dbReference type="InterPro" id="IPR027417">
    <property type="entry name" value="P-loop_NTPase"/>
</dbReference>
<dbReference type="InterPro" id="IPR020568">
    <property type="entry name" value="Ribosomal_Su5_D2-typ_SF"/>
</dbReference>
<dbReference type="InterPro" id="IPR014721">
    <property type="entry name" value="Ribsml_uS5_D2-typ_fold_subgr"/>
</dbReference>
<dbReference type="InterPro" id="IPR005225">
    <property type="entry name" value="Small_GTP-bd"/>
</dbReference>
<dbReference type="InterPro" id="IPR044121">
    <property type="entry name" value="Snu114_GTP-bd"/>
</dbReference>
<dbReference type="InterPro" id="IPR000795">
    <property type="entry name" value="T_Tr_GTP-bd_dom"/>
</dbReference>
<dbReference type="InterPro" id="IPR009000">
    <property type="entry name" value="Transl_B-barrel_sf"/>
</dbReference>
<dbReference type="InterPro" id="IPR005517">
    <property type="entry name" value="Transl_elong_EFG/EF2_IV"/>
</dbReference>
<dbReference type="InterPro" id="IPR035655">
    <property type="entry name" value="U5-116kDa_C"/>
</dbReference>
<dbReference type="NCBIfam" id="TIGR00231">
    <property type="entry name" value="small_GTP"/>
    <property type="match status" value="1"/>
</dbReference>
<dbReference type="PANTHER" id="PTHR42908:SF6">
    <property type="entry name" value="116 KDA U5 SMALL NUCLEAR RIBONUCLEOPROTEIN COMPONENT"/>
    <property type="match status" value="1"/>
</dbReference>
<dbReference type="PANTHER" id="PTHR42908">
    <property type="entry name" value="TRANSLATION ELONGATION FACTOR-RELATED"/>
    <property type="match status" value="1"/>
</dbReference>
<dbReference type="Pfam" id="PF00679">
    <property type="entry name" value="EFG_C"/>
    <property type="match status" value="1"/>
</dbReference>
<dbReference type="Pfam" id="PF03764">
    <property type="entry name" value="EFG_IV"/>
    <property type="match status" value="1"/>
</dbReference>
<dbReference type="Pfam" id="PF16004">
    <property type="entry name" value="EFTUD2"/>
    <property type="match status" value="1"/>
</dbReference>
<dbReference type="Pfam" id="PF00009">
    <property type="entry name" value="GTP_EFTU"/>
    <property type="match status" value="1"/>
</dbReference>
<dbReference type="Pfam" id="PF03144">
    <property type="entry name" value="GTP_EFTU_D2"/>
    <property type="match status" value="1"/>
</dbReference>
<dbReference type="PRINTS" id="PR00315">
    <property type="entry name" value="ELONGATNFCT"/>
</dbReference>
<dbReference type="SMART" id="SM00838">
    <property type="entry name" value="EFG_C"/>
    <property type="match status" value="1"/>
</dbReference>
<dbReference type="SMART" id="SM00889">
    <property type="entry name" value="EFG_IV"/>
    <property type="match status" value="1"/>
</dbReference>
<dbReference type="SUPFAM" id="SSF54980">
    <property type="entry name" value="EF-G C-terminal domain-like"/>
    <property type="match status" value="2"/>
</dbReference>
<dbReference type="SUPFAM" id="SSF52540">
    <property type="entry name" value="P-loop containing nucleoside triphosphate hydrolases"/>
    <property type="match status" value="1"/>
</dbReference>
<dbReference type="SUPFAM" id="SSF54211">
    <property type="entry name" value="Ribosomal protein S5 domain 2-like"/>
    <property type="match status" value="1"/>
</dbReference>
<dbReference type="SUPFAM" id="SSF50447">
    <property type="entry name" value="Translation proteins"/>
    <property type="match status" value="1"/>
</dbReference>
<dbReference type="PROSITE" id="PS51722">
    <property type="entry name" value="G_TR_2"/>
    <property type="match status" value="1"/>
</dbReference>
<protein>
    <recommendedName>
        <fullName>Pre-mRNA-splicing factor cwf10</fullName>
    </recommendedName>
    <alternativeName>
        <fullName>114 kDa U5 small nuclear ribonucleoprotein component homolog</fullName>
    </alternativeName>
    <alternativeName>
        <fullName>Complexed with cdc5 protein 10</fullName>
    </alternativeName>
</protein>
<evidence type="ECO:0000250" key="1"/>
<evidence type="ECO:0000255" key="2">
    <source>
        <dbReference type="PROSITE-ProRule" id="PRU01059"/>
    </source>
</evidence>
<evidence type="ECO:0000256" key="3">
    <source>
        <dbReference type="SAM" id="MobiDB-lite"/>
    </source>
</evidence>
<evidence type="ECO:0000269" key="4">
    <source>
    </source>
</evidence>
<evidence type="ECO:0000269" key="5">
    <source>
    </source>
</evidence>
<evidence type="ECO:0000269" key="6">
    <source>
    </source>
</evidence>
<evidence type="ECO:0007829" key="7">
    <source>
        <dbReference type="PDB" id="9ESH"/>
    </source>
</evidence>
<evidence type="ECO:0007829" key="8">
    <source>
        <dbReference type="PDB" id="9ESI"/>
    </source>
</evidence>
<organism>
    <name type="scientific">Schizosaccharomyces pombe (strain 972 / ATCC 24843)</name>
    <name type="common">Fission yeast</name>
    <dbReference type="NCBI Taxonomy" id="284812"/>
    <lineage>
        <taxon>Eukaryota</taxon>
        <taxon>Fungi</taxon>
        <taxon>Dikarya</taxon>
        <taxon>Ascomycota</taxon>
        <taxon>Taphrinomycotina</taxon>
        <taxon>Schizosaccharomycetes</taxon>
        <taxon>Schizosaccharomycetales</taxon>
        <taxon>Schizosaccharomycetaceae</taxon>
        <taxon>Schizosaccharomyces</taxon>
    </lineage>
</organism>
<proteinExistence type="evidence at protein level"/>
<name>SN114_SCHPO</name>
<sequence length="984" mass="111306">MMEEDLYDEFGNYIGPENEEDEEELFPQAPSPTIAQVPSFEEVIPDEELEDVERAEEMALSHLEPQNAVVLHEDKQYYPSAEEVYGSNVDIMVQEQDTQPLSQPIIEPIRHKRIAIETTNVPDTVYKKEFLFGLLTGTDDVRSFIVAGHLHHGKSALLDLLVYYTHPDTKPPKRRSLRYTDTHYLERERVMSIKSTPLTLAVSDMKGKTFAFQCIDTPGHVDFVDEVAAPMAISDGVVLVVDVIEGVMINTTRIIKHAILHDMPIVLVLNKVDRLILELRLPPNDAYHKLRHVIDEVNDNICQISKDLKYRVSPELGNVCFASCDLGYCFTLSSFAKLYIDRHGGIDVDLFSKRLWGDIYFDSKTRKFAKQSLDGSGVRSFVHFILEPLYKLHTLTISDEAEKLKKHLSSFQIYLKPKDYLLDPKPLLQLICASFFGFPVGFVNAVTRHIPSPRENAARKASQSYIGPINSSIGKAILEMSREESAPLVMHVTKLYNTVDANNFYAFARVYSGQVKKGQKVKVLGENYSLEDEEDMVVAHIAEICVPCARYRLHVDGAVAGMLVLLGGVDNSISKTATIVSDNLKDDPYIFRPIAHMSESVFKVAVEPHNPSELPKLLDGLRKTNKSYPLSITKVEESGEHTIFGTGEMYMDCLLYDLRTLYSEIEIRVSDPVARFCETAVDTSSIKCFSDTPNKKNRITMVVEPLEKGISNDIENGKVNINWPQKRISEFFQKNYDWDLLASRSIWAFGPDDRGTNILRDDTLSTDVDKNVLNSVKEYIKQGFQWGTREGPLCDETIRNVNFRLMDVVLAPEQIYRGGGQIIPTARRVCYSSFLTASPRLMEPVYMVEVHAPADSLPIIYDLLTRRRGHVLQDIPRPGSPLYLVRALIPVIDSCGFETDLRVHTQGQAMCQMVFDHWQVVPGDPLDKSIKPKPLEPARGSDLARDFLIKTRRRKGLVEDVSTTRYFDQEMIDSLKEAGVVLSL</sequence>
<feature type="chain" id="PRO_0000363370" description="Pre-mRNA-splicing factor cwf10">
    <location>
        <begin position="1"/>
        <end position="984"/>
    </location>
</feature>
<feature type="domain" description="tr-type G" evidence="2">
    <location>
        <begin position="139"/>
        <end position="402"/>
    </location>
</feature>
<feature type="region of interest" description="Disordered" evidence="3">
    <location>
        <begin position="1"/>
        <end position="28"/>
    </location>
</feature>
<feature type="region of interest" description="G1" evidence="2">
    <location>
        <begin position="148"/>
        <end position="155"/>
    </location>
</feature>
<feature type="region of interest" description="G2" evidence="2">
    <location>
        <begin position="190"/>
        <end position="194"/>
    </location>
</feature>
<feature type="region of interest" description="G3" evidence="2">
    <location>
        <begin position="216"/>
        <end position="219"/>
    </location>
</feature>
<feature type="region of interest" description="G4" evidence="2">
    <location>
        <begin position="270"/>
        <end position="273"/>
    </location>
</feature>
<feature type="region of interest" description="G5" evidence="2">
    <location>
        <begin position="371"/>
        <end position="373"/>
    </location>
</feature>
<feature type="binding site" evidence="1">
    <location>
        <begin position="148"/>
        <end position="155"/>
    </location>
    <ligand>
        <name>GTP</name>
        <dbReference type="ChEBI" id="CHEBI:37565"/>
    </ligand>
</feature>
<feature type="binding site" evidence="1">
    <location>
        <begin position="216"/>
        <end position="220"/>
    </location>
    <ligand>
        <name>GTP</name>
        <dbReference type="ChEBI" id="CHEBI:37565"/>
    </ligand>
</feature>
<feature type="binding site" evidence="1">
    <location>
        <begin position="270"/>
        <end position="273"/>
    </location>
    <ligand>
        <name>GTP</name>
        <dbReference type="ChEBI" id="CHEBI:37565"/>
    </ligand>
</feature>
<feature type="turn" evidence="8">
    <location>
        <begin position="72"/>
        <end position="74"/>
    </location>
</feature>
<feature type="helix" evidence="8">
    <location>
        <begin position="81"/>
        <end position="85"/>
    </location>
</feature>
<feature type="strand" evidence="8">
    <location>
        <begin position="87"/>
        <end position="92"/>
    </location>
</feature>
<feature type="helix" evidence="8">
    <location>
        <begin position="128"/>
        <end position="137"/>
    </location>
</feature>
<feature type="strand" evidence="8">
    <location>
        <begin position="141"/>
        <end position="149"/>
    </location>
</feature>
<feature type="helix" evidence="8">
    <location>
        <begin position="154"/>
        <end position="165"/>
    </location>
</feature>
<feature type="strand" evidence="8">
    <location>
        <begin position="173"/>
        <end position="175"/>
    </location>
</feature>
<feature type="helix" evidence="8">
    <location>
        <begin position="184"/>
        <end position="189"/>
    </location>
</feature>
<feature type="strand" evidence="8">
    <location>
        <begin position="196"/>
        <end position="203"/>
    </location>
</feature>
<feature type="strand" evidence="7">
    <location>
        <begin position="205"/>
        <end position="207"/>
    </location>
</feature>
<feature type="strand" evidence="8">
    <location>
        <begin position="209"/>
        <end position="216"/>
    </location>
</feature>
<feature type="strand" evidence="8">
    <location>
        <begin position="220"/>
        <end position="222"/>
    </location>
</feature>
<feature type="helix" evidence="8">
    <location>
        <begin position="225"/>
        <end position="231"/>
    </location>
</feature>
<feature type="strand" evidence="8">
    <location>
        <begin position="235"/>
        <end position="242"/>
    </location>
</feature>
<feature type="turn" evidence="8">
    <location>
        <begin position="243"/>
        <end position="245"/>
    </location>
</feature>
<feature type="helix" evidence="8">
    <location>
        <begin position="249"/>
        <end position="260"/>
    </location>
</feature>
<feature type="strand" evidence="8">
    <location>
        <begin position="265"/>
        <end position="270"/>
    </location>
</feature>
<feature type="helix" evidence="8">
    <location>
        <begin position="273"/>
        <end position="277"/>
    </location>
</feature>
<feature type="helix" evidence="8">
    <location>
        <begin position="283"/>
        <end position="302"/>
    </location>
</feature>
<feature type="strand" evidence="8">
    <location>
        <begin position="308"/>
        <end position="310"/>
    </location>
</feature>
<feature type="helix" evidence="8">
    <location>
        <begin position="314"/>
        <end position="316"/>
    </location>
</feature>
<feature type="strand" evidence="8">
    <location>
        <begin position="319"/>
        <end position="323"/>
    </location>
</feature>
<feature type="turn" evidence="8">
    <location>
        <begin position="324"/>
        <end position="327"/>
    </location>
</feature>
<feature type="strand" evidence="8">
    <location>
        <begin position="328"/>
        <end position="330"/>
    </location>
</feature>
<feature type="helix" evidence="8">
    <location>
        <begin position="332"/>
        <end position="343"/>
    </location>
</feature>
<feature type="helix" evidence="8">
    <location>
        <begin position="348"/>
        <end position="352"/>
    </location>
</feature>
<feature type="strand" evidence="8">
    <location>
        <begin position="360"/>
        <end position="362"/>
    </location>
</feature>
<feature type="turn" evidence="8">
    <location>
        <begin position="363"/>
        <end position="366"/>
    </location>
</feature>
<feature type="strand" evidence="8">
    <location>
        <begin position="367"/>
        <end position="371"/>
    </location>
</feature>
<feature type="helix" evidence="8">
    <location>
        <begin position="380"/>
        <end position="384"/>
    </location>
</feature>
<feature type="helix" evidence="8">
    <location>
        <begin position="386"/>
        <end position="397"/>
    </location>
</feature>
<feature type="helix" evidence="8">
    <location>
        <begin position="401"/>
        <end position="410"/>
    </location>
</feature>
<feature type="turn" evidence="8">
    <location>
        <begin position="417"/>
        <end position="420"/>
    </location>
</feature>
<feature type="helix" evidence="8">
    <location>
        <begin position="424"/>
        <end position="435"/>
    </location>
</feature>
<feature type="helix" evidence="8">
    <location>
        <begin position="440"/>
        <end position="449"/>
    </location>
</feature>
<feature type="turn" evidence="8">
    <location>
        <begin position="453"/>
        <end position="456"/>
    </location>
</feature>
<feature type="helix" evidence="8">
    <location>
        <begin position="457"/>
        <end position="463"/>
    </location>
</feature>
<feature type="helix" evidence="8">
    <location>
        <begin position="472"/>
        <end position="479"/>
    </location>
</feature>
<feature type="strand" evidence="8">
    <location>
        <begin position="489"/>
        <end position="497"/>
    </location>
</feature>
<feature type="strand" evidence="8">
    <location>
        <begin position="504"/>
        <end position="516"/>
    </location>
</feature>
<feature type="strand" evidence="8">
    <location>
        <begin position="520"/>
        <end position="524"/>
    </location>
</feature>
<feature type="strand" evidence="8">
    <location>
        <begin position="529"/>
        <end position="531"/>
    </location>
</feature>
<feature type="strand" evidence="8">
    <location>
        <begin position="537"/>
        <end position="540"/>
    </location>
</feature>
<feature type="strand" evidence="8">
    <location>
        <begin position="543"/>
        <end position="554"/>
    </location>
</feature>
<feature type="strand" evidence="8">
    <location>
        <begin position="556"/>
        <end position="559"/>
    </location>
</feature>
<feature type="strand" evidence="8">
    <location>
        <begin position="562"/>
        <end position="568"/>
    </location>
</feature>
<feature type="strand" evidence="8">
    <location>
        <begin position="577"/>
        <end position="584"/>
    </location>
</feature>
<feature type="strand" evidence="8">
    <location>
        <begin position="603"/>
        <end position="610"/>
    </location>
</feature>
<feature type="helix" evidence="8">
    <location>
        <begin position="611"/>
        <end position="613"/>
    </location>
</feature>
<feature type="helix" evidence="8">
    <location>
        <begin position="614"/>
        <end position="627"/>
    </location>
</feature>
<feature type="strand" evidence="8">
    <location>
        <begin position="632"/>
        <end position="635"/>
    </location>
</feature>
<feature type="strand" evidence="8">
    <location>
        <begin position="641"/>
        <end position="644"/>
    </location>
</feature>
<feature type="helix" evidence="8">
    <location>
        <begin position="648"/>
        <end position="660"/>
    </location>
</feature>
<feature type="strand" evidence="8">
    <location>
        <begin position="667"/>
        <end position="669"/>
    </location>
</feature>
<feature type="strand" evidence="8">
    <location>
        <begin position="677"/>
        <end position="682"/>
    </location>
</feature>
<feature type="strand" evidence="8">
    <location>
        <begin position="688"/>
        <end position="691"/>
    </location>
</feature>
<feature type="strand" evidence="8">
    <location>
        <begin position="698"/>
        <end position="705"/>
    </location>
</feature>
<feature type="helix" evidence="8">
    <location>
        <begin position="709"/>
        <end position="715"/>
    </location>
</feature>
<feature type="strand" evidence="8">
    <location>
        <begin position="721"/>
        <end position="723"/>
    </location>
</feature>
<feature type="helix" evidence="8">
    <location>
        <begin position="725"/>
        <end position="736"/>
    </location>
</feature>
<feature type="helix" evidence="8">
    <location>
        <begin position="740"/>
        <end position="744"/>
    </location>
</feature>
<feature type="strand" evidence="8">
    <location>
        <begin position="746"/>
        <end position="752"/>
    </location>
</feature>
<feature type="strand" evidence="8">
    <location>
        <begin position="756"/>
        <end position="761"/>
    </location>
</feature>
<feature type="helix" evidence="8">
    <location>
        <begin position="770"/>
        <end position="789"/>
    </location>
</feature>
<feature type="strand" evidence="8">
    <location>
        <begin position="792"/>
        <end position="796"/>
    </location>
</feature>
<feature type="strand" evidence="8">
    <location>
        <begin position="800"/>
        <end position="809"/>
    </location>
</feature>
<feature type="helix" evidence="8">
    <location>
        <begin position="814"/>
        <end position="816"/>
    </location>
</feature>
<feature type="helix" evidence="8">
    <location>
        <begin position="819"/>
        <end position="836"/>
    </location>
</feature>
<feature type="strand" evidence="8">
    <location>
        <begin position="839"/>
        <end position="852"/>
    </location>
</feature>
<feature type="helix" evidence="8">
    <location>
        <begin position="854"/>
        <end position="856"/>
    </location>
</feature>
<feature type="helix" evidence="8">
    <location>
        <begin position="857"/>
        <end position="866"/>
    </location>
</feature>
<feature type="strand" evidence="8">
    <location>
        <begin position="870"/>
        <end position="876"/>
    </location>
</feature>
<feature type="strand" evidence="8">
    <location>
        <begin position="880"/>
        <end position="888"/>
    </location>
</feature>
<feature type="helix" evidence="8">
    <location>
        <begin position="891"/>
        <end position="893"/>
    </location>
</feature>
<feature type="helix" evidence="8">
    <location>
        <begin position="897"/>
        <end position="904"/>
    </location>
</feature>
<feature type="turn" evidence="8">
    <location>
        <begin position="905"/>
        <end position="907"/>
    </location>
</feature>
<feature type="strand" evidence="8">
    <location>
        <begin position="914"/>
        <end position="920"/>
    </location>
</feature>
<feature type="strand" evidence="8">
    <location>
        <begin position="940"/>
        <end position="942"/>
    </location>
</feature>
<feature type="helix" evidence="8">
    <location>
        <begin position="943"/>
        <end position="955"/>
    </location>
</feature>
<feature type="helix" evidence="8">
    <location>
        <begin position="963"/>
        <end position="965"/>
    </location>
</feature>
<feature type="helix" evidence="8">
    <location>
        <begin position="969"/>
        <end position="978"/>
    </location>
</feature>
<feature type="turn" evidence="8">
    <location>
        <begin position="981"/>
        <end position="983"/>
    </location>
</feature>
<keyword id="KW-0002">3D-structure</keyword>
<keyword id="KW-0963">Cytoplasm</keyword>
<keyword id="KW-0342">GTP-binding</keyword>
<keyword id="KW-0507">mRNA processing</keyword>
<keyword id="KW-0508">mRNA splicing</keyword>
<keyword id="KW-0547">Nucleotide-binding</keyword>
<keyword id="KW-0539">Nucleus</keyword>
<keyword id="KW-1185">Reference proteome</keyword>
<reference key="1">
    <citation type="journal article" date="2002" name="Nature">
        <title>The genome sequence of Schizosaccharomyces pombe.</title>
        <authorList>
            <person name="Wood V."/>
            <person name="Gwilliam R."/>
            <person name="Rajandream M.A."/>
            <person name="Lyne M.H."/>
            <person name="Lyne R."/>
            <person name="Stewart A."/>
            <person name="Sgouros J.G."/>
            <person name="Peat N."/>
            <person name="Hayles J."/>
            <person name="Baker S.G."/>
            <person name="Basham D."/>
            <person name="Bowman S."/>
            <person name="Brooks K."/>
            <person name="Brown D."/>
            <person name="Brown S."/>
            <person name="Chillingworth T."/>
            <person name="Churcher C.M."/>
            <person name="Collins M."/>
            <person name="Connor R."/>
            <person name="Cronin A."/>
            <person name="Davis P."/>
            <person name="Feltwell T."/>
            <person name="Fraser A."/>
            <person name="Gentles S."/>
            <person name="Goble A."/>
            <person name="Hamlin N."/>
            <person name="Harris D.E."/>
            <person name="Hidalgo J."/>
            <person name="Hodgson G."/>
            <person name="Holroyd S."/>
            <person name="Hornsby T."/>
            <person name="Howarth S."/>
            <person name="Huckle E.J."/>
            <person name="Hunt S."/>
            <person name="Jagels K."/>
            <person name="James K.D."/>
            <person name="Jones L."/>
            <person name="Jones M."/>
            <person name="Leather S."/>
            <person name="McDonald S."/>
            <person name="McLean J."/>
            <person name="Mooney P."/>
            <person name="Moule S."/>
            <person name="Mungall K.L."/>
            <person name="Murphy L.D."/>
            <person name="Niblett D."/>
            <person name="Odell C."/>
            <person name="Oliver K."/>
            <person name="O'Neil S."/>
            <person name="Pearson D."/>
            <person name="Quail M.A."/>
            <person name="Rabbinowitsch E."/>
            <person name="Rutherford K.M."/>
            <person name="Rutter S."/>
            <person name="Saunders D."/>
            <person name="Seeger K."/>
            <person name="Sharp S."/>
            <person name="Skelton J."/>
            <person name="Simmonds M.N."/>
            <person name="Squares R."/>
            <person name="Squares S."/>
            <person name="Stevens K."/>
            <person name="Taylor K."/>
            <person name="Taylor R.G."/>
            <person name="Tivey A."/>
            <person name="Walsh S.V."/>
            <person name="Warren T."/>
            <person name="Whitehead S."/>
            <person name="Woodward J.R."/>
            <person name="Volckaert G."/>
            <person name="Aert R."/>
            <person name="Robben J."/>
            <person name="Grymonprez B."/>
            <person name="Weltjens I."/>
            <person name="Vanstreels E."/>
            <person name="Rieger M."/>
            <person name="Schaefer M."/>
            <person name="Mueller-Auer S."/>
            <person name="Gabel C."/>
            <person name="Fuchs M."/>
            <person name="Duesterhoeft A."/>
            <person name="Fritzc C."/>
            <person name="Holzer E."/>
            <person name="Moestl D."/>
            <person name="Hilbert H."/>
            <person name="Borzym K."/>
            <person name="Langer I."/>
            <person name="Beck A."/>
            <person name="Lehrach H."/>
            <person name="Reinhardt R."/>
            <person name="Pohl T.M."/>
            <person name="Eger P."/>
            <person name="Zimmermann W."/>
            <person name="Wedler H."/>
            <person name="Wambutt R."/>
            <person name="Purnelle B."/>
            <person name="Goffeau A."/>
            <person name="Cadieu E."/>
            <person name="Dreano S."/>
            <person name="Gloux S."/>
            <person name="Lelaure V."/>
            <person name="Mottier S."/>
            <person name="Galibert F."/>
            <person name="Aves S.J."/>
            <person name="Xiang Z."/>
            <person name="Hunt C."/>
            <person name="Moore K."/>
            <person name="Hurst S.M."/>
            <person name="Lucas M."/>
            <person name="Rochet M."/>
            <person name="Gaillardin C."/>
            <person name="Tallada V.A."/>
            <person name="Garzon A."/>
            <person name="Thode G."/>
            <person name="Daga R.R."/>
            <person name="Cruzado L."/>
            <person name="Jimenez J."/>
            <person name="Sanchez M."/>
            <person name="del Rey F."/>
            <person name="Benito J."/>
            <person name="Dominguez A."/>
            <person name="Revuelta J.L."/>
            <person name="Moreno S."/>
            <person name="Armstrong J."/>
            <person name="Forsburg S.L."/>
            <person name="Cerutti L."/>
            <person name="Lowe T."/>
            <person name="McCombie W.R."/>
            <person name="Paulsen I."/>
            <person name="Potashkin J."/>
            <person name="Shpakovski G.V."/>
            <person name="Ussery D."/>
            <person name="Barrell B.G."/>
            <person name="Nurse P."/>
        </authorList>
    </citation>
    <scope>NUCLEOTIDE SEQUENCE [LARGE SCALE GENOMIC DNA]</scope>
    <source>
        <strain>972 / ATCC 24843</strain>
    </source>
</reference>
<reference key="2">
    <citation type="journal article" date="2011" name="Science">
        <title>Comparative functional genomics of the fission yeasts.</title>
        <authorList>
            <person name="Rhind N."/>
            <person name="Chen Z."/>
            <person name="Yassour M."/>
            <person name="Thompson D.A."/>
            <person name="Haas B.J."/>
            <person name="Habib N."/>
            <person name="Wapinski I."/>
            <person name="Roy S."/>
            <person name="Lin M.F."/>
            <person name="Heiman D.I."/>
            <person name="Young S.K."/>
            <person name="Furuya K."/>
            <person name="Guo Y."/>
            <person name="Pidoux A."/>
            <person name="Chen H.M."/>
            <person name="Robbertse B."/>
            <person name="Goldberg J.M."/>
            <person name="Aoki K."/>
            <person name="Bayne E.H."/>
            <person name="Berlin A.M."/>
            <person name="Desjardins C.A."/>
            <person name="Dobbs E."/>
            <person name="Dukaj L."/>
            <person name="Fan L."/>
            <person name="FitzGerald M.G."/>
            <person name="French C."/>
            <person name="Gujja S."/>
            <person name="Hansen K."/>
            <person name="Keifenheim D."/>
            <person name="Levin J.Z."/>
            <person name="Mosher R.A."/>
            <person name="Mueller C.A."/>
            <person name="Pfiffner J."/>
            <person name="Priest M."/>
            <person name="Russ C."/>
            <person name="Smialowska A."/>
            <person name="Swoboda P."/>
            <person name="Sykes S.M."/>
            <person name="Vaughn M."/>
            <person name="Vengrova S."/>
            <person name="Yoder R."/>
            <person name="Zeng Q."/>
            <person name="Allshire R."/>
            <person name="Baulcombe D."/>
            <person name="Birren B.W."/>
            <person name="Brown W."/>
            <person name="Ekwall K."/>
            <person name="Kellis M."/>
            <person name="Leatherwood J."/>
            <person name="Levin H."/>
            <person name="Margalit H."/>
            <person name="Martienssen R."/>
            <person name="Nieduszynski C.A."/>
            <person name="Spatafora J.W."/>
            <person name="Friedman N."/>
            <person name="Dalgaard J.Z."/>
            <person name="Baumann P."/>
            <person name="Niki H."/>
            <person name="Regev A."/>
            <person name="Nusbaum C."/>
        </authorList>
    </citation>
    <scope>REVISION OF GENE MODEL</scope>
</reference>
<reference key="3">
    <citation type="journal article" date="1999" name="Mol. Cell. Biol.">
        <title>Myb-related fission yeast cdc5p is a component of a 40S snRNP-containing complex and is essential for pre-mRNA splicing.</title>
        <authorList>
            <person name="McDonald W.H."/>
            <person name="Ohi R."/>
            <person name="Smelkova N."/>
            <person name="Frendewey D."/>
            <person name="Gould K.L."/>
        </authorList>
    </citation>
    <scope>IDENTIFICATION IN THE CWF COMPLEX</scope>
    <scope>IDENTIFICATION BY MASS SPECTROMETRY</scope>
</reference>
<reference key="4">
    <citation type="journal article" date="2002" name="Mol. Cell. Biol.">
        <title>Proteomics analysis reveals stable multiprotein complexes in both fission and budding yeasts containing Myb-related Cdc5p/Cef1p, novel pre-mRNA splicing factors, and snRNAs.</title>
        <authorList>
            <person name="Ohi M.D."/>
            <person name="Link A.J."/>
            <person name="Ren L."/>
            <person name="Jennings J.L."/>
            <person name="McDonald W.H."/>
            <person name="Gould K.L."/>
        </authorList>
    </citation>
    <scope>IDENTIFICATION IN THE CWF COMPLEX</scope>
    <scope>IDENTIFICATION BY MASS SPECTROMETRY</scope>
</reference>
<reference key="5">
    <citation type="journal article" date="2006" name="Nat. Biotechnol.">
        <title>ORFeome cloning and global analysis of protein localization in the fission yeast Schizosaccharomyces pombe.</title>
        <authorList>
            <person name="Matsuyama A."/>
            <person name="Arai R."/>
            <person name="Yashiroda Y."/>
            <person name="Shirai A."/>
            <person name="Kamata A."/>
            <person name="Sekido S."/>
            <person name="Kobayashi Y."/>
            <person name="Hashimoto A."/>
            <person name="Hamamoto M."/>
            <person name="Hiraoka Y."/>
            <person name="Horinouchi S."/>
            <person name="Yoshida M."/>
        </authorList>
    </citation>
    <scope>SUBCELLULAR LOCATION [LARGE SCALE ANALYSIS]</scope>
</reference>
<accession>O94316</accession>
<comment type="function">
    <text>Component of the U5 snRNP complex required for pre-mRNA splicing. Binds GTP.</text>
</comment>
<comment type="subunit">
    <text evidence="4 5">Belongs to the 40S cdc5-associated complex (or cwf complex), a spliceosome sub-complex reminiscent of a late-stage spliceosome composed of the U2, U5 and U6 snRNAs and at least brr2, cdc5, cwf2/prp3, cwf3/syf1, cwf4/syf3, cwf5/ecm2, spp42/cwf6, cwf7/spf27, cwf8, cwf9, cwf10, cwf11, cwf12, prp45/cwf13, cwf14, cwf15, cwf16, cwf17, cwf18, cwf19, cwf20, cwf21, cwf22, cwf23, cwf24, cwf25, cwf26, cyp7/cwf27, cwf28, cwf29/ist3, lea1, msl1, prp5/cwf1, prp10, prp12/sap130, prp17, prp22, sap61, sap62, sap114, sap145, slu7, smb1, smd1, smd3, smf1, smg1 and syf2.</text>
</comment>
<comment type="interaction">
    <interactant intactId="EBI-538866">
        <id>O94316</id>
    </interactant>
    <interactant intactId="EBI-538771">
        <id>P39964</id>
        <label>cdc5</label>
    </interactant>
    <organismsDiffer>false</organismsDiffer>
    <experiments>5</experiments>
</comment>
<comment type="interaction">
    <interactant intactId="EBI-538866">
        <id>O94316</id>
    </interactant>
    <interactant intactId="EBI-9003631">
        <id>O42975</id>
        <label>SPBC20F10.05</label>
    </interactant>
    <organismsDiffer>false</organismsDiffer>
    <experiments>3</experiments>
</comment>
<comment type="subcellular location">
    <subcellularLocation>
        <location evidence="6">Cytoplasm</location>
    </subcellularLocation>
    <subcellularLocation>
        <location evidence="6">Nucleus</location>
    </subcellularLocation>
</comment>
<comment type="similarity">
    <text evidence="2">Belongs to the TRAFAC class translation factor GTPase superfamily. Classic translation factor GTPase family. EF-G/EF-2 subfamily.</text>
</comment>